<dbReference type="EC" id="4.4.1.43" evidence="2"/>
<dbReference type="EMBL" id="CP001192">
    <property type="protein sequence ID" value="ACI58282.1"/>
    <property type="molecule type" value="Genomic_DNA"/>
</dbReference>
<dbReference type="RefSeq" id="WP_012555980.1">
    <property type="nucleotide sequence ID" value="NC_011368.1"/>
</dbReference>
<dbReference type="SMR" id="P0DXD3"/>
<dbReference type="KEGG" id="rlt:Rleg2_5066"/>
<dbReference type="HOGENOM" id="CLU_018986_2_0_5"/>
<dbReference type="Proteomes" id="UP000008330">
    <property type="component" value="Plasmid pRLG201"/>
</dbReference>
<dbReference type="GO" id="GO:0005737">
    <property type="term" value="C:cytoplasm"/>
    <property type="evidence" value="ECO:0007669"/>
    <property type="project" value="TreeGrafter"/>
</dbReference>
<dbReference type="GO" id="GO:0016846">
    <property type="term" value="F:carbon-sulfur lyase activity"/>
    <property type="evidence" value="ECO:0007669"/>
    <property type="project" value="TreeGrafter"/>
</dbReference>
<dbReference type="GO" id="GO:0030170">
    <property type="term" value="F:pyridoxal phosphate binding"/>
    <property type="evidence" value="ECO:0007669"/>
    <property type="project" value="InterPro"/>
</dbReference>
<dbReference type="GO" id="GO:0019346">
    <property type="term" value="P:transsulfuration"/>
    <property type="evidence" value="ECO:0007669"/>
    <property type="project" value="InterPro"/>
</dbReference>
<dbReference type="CDD" id="cd00614">
    <property type="entry name" value="CGS_like"/>
    <property type="match status" value="1"/>
</dbReference>
<dbReference type="FunFam" id="3.40.640.10:FF:000046">
    <property type="entry name" value="Cystathionine gamma-lyase"/>
    <property type="match status" value="1"/>
</dbReference>
<dbReference type="Gene3D" id="3.90.1150.10">
    <property type="entry name" value="Aspartate Aminotransferase, domain 1"/>
    <property type="match status" value="1"/>
</dbReference>
<dbReference type="Gene3D" id="3.40.640.10">
    <property type="entry name" value="Type I PLP-dependent aspartate aminotransferase-like (Major domain)"/>
    <property type="match status" value="1"/>
</dbReference>
<dbReference type="InterPro" id="IPR000277">
    <property type="entry name" value="Cys/Met-Metab_PyrdxlP-dep_enz"/>
</dbReference>
<dbReference type="InterPro" id="IPR054542">
    <property type="entry name" value="Cys_met_metab_PP"/>
</dbReference>
<dbReference type="InterPro" id="IPR015424">
    <property type="entry name" value="PyrdxlP-dep_Trfase"/>
</dbReference>
<dbReference type="InterPro" id="IPR015421">
    <property type="entry name" value="PyrdxlP-dep_Trfase_major"/>
</dbReference>
<dbReference type="InterPro" id="IPR015422">
    <property type="entry name" value="PyrdxlP-dep_Trfase_small"/>
</dbReference>
<dbReference type="PANTHER" id="PTHR11808:SF80">
    <property type="entry name" value="CYSTATHIONINE GAMMA-LYASE"/>
    <property type="match status" value="1"/>
</dbReference>
<dbReference type="PANTHER" id="PTHR11808">
    <property type="entry name" value="TRANS-SULFURATION ENZYME FAMILY MEMBER"/>
    <property type="match status" value="1"/>
</dbReference>
<dbReference type="Pfam" id="PF01053">
    <property type="entry name" value="Cys_Met_Meta_PP"/>
    <property type="match status" value="1"/>
</dbReference>
<dbReference type="PIRSF" id="PIRSF001434">
    <property type="entry name" value="CGS"/>
    <property type="match status" value="1"/>
</dbReference>
<dbReference type="SUPFAM" id="SSF53383">
    <property type="entry name" value="PLP-dependent transferases"/>
    <property type="match status" value="1"/>
</dbReference>
<dbReference type="PROSITE" id="PS00868">
    <property type="entry name" value="CYS_MET_METAB_PP"/>
    <property type="match status" value="1"/>
</dbReference>
<comment type="function">
    <text evidence="2">Lyase involved in the degradation of canavanine, the delta-oxa-analog of arginine, allowing growth on canavanine as sole nitrogen and carbon source (PubMed:36320885). Catalyzes the elimination of hydroxyguanidine from canavanine with a subsequent water addition to yield homoserine (PubMed:36320885).</text>
</comment>
<comment type="catalytic activity">
    <reaction evidence="2">
        <text>L-canavanine + H2O = N-hydroxyguanidine + L-homoserine</text>
        <dbReference type="Rhea" id="RHEA:75379"/>
        <dbReference type="ChEBI" id="CHEBI:15377"/>
        <dbReference type="ChEBI" id="CHEBI:57476"/>
        <dbReference type="ChEBI" id="CHEBI:78902"/>
        <dbReference type="ChEBI" id="CHEBI:194307"/>
        <dbReference type="EC" id="4.4.1.43"/>
    </reaction>
    <physiologicalReaction direction="left-to-right" evidence="2">
        <dbReference type="Rhea" id="RHEA:75380"/>
    </physiologicalReaction>
</comment>
<comment type="cofactor">
    <cofactor evidence="1">
        <name>pyridoxal 5'-phosphate</name>
        <dbReference type="ChEBI" id="CHEBI:597326"/>
    </cofactor>
</comment>
<comment type="biophysicochemical properties">
    <kinetics>
        <KM evidence="2">390 uM for canavanine</KM>
        <text evidence="2">kcat is 1.23 sec(-1).</text>
    </kinetics>
</comment>
<comment type="similarity">
    <text evidence="4">Belongs to the trans-sulfuration enzymes family.</text>
</comment>
<evidence type="ECO:0000250" key="1">
    <source>
        <dbReference type="UniProtKB" id="P13254"/>
    </source>
</evidence>
<evidence type="ECO:0000269" key="2">
    <source>
    </source>
</evidence>
<evidence type="ECO:0000303" key="3">
    <source>
    </source>
</evidence>
<evidence type="ECO:0000305" key="4"/>
<evidence type="ECO:0000312" key="5">
    <source>
        <dbReference type="EMBL" id="ACI58282.1"/>
    </source>
</evidence>
<sequence length="401" mass="43499">MPNPDKHNFSSLSFGTLAVHGGNEIDKTSGAIRTPIVMANSYSLPYDPSTMDWSDTEEPSYTRNSGHNQICLQRKLAAMERGEDAAVFATGVAALHAVFFTFLKSGDHVIVGDVTYEAVWRLFAELLPERYNIEATFVDMGNMDAVRAAVRPKTKLIHTETVANPTTKVADIAALVSIAKDAGALLSVDSTFTPPPFFRPLELGVDLVIHSLTKYINGHGDAMGGVVIGSKKLVHHIKADALVDLGGTISPFNAWLITRGSVTLPLRLKQQFSTAEIVARYLESENRLAFVTYPGLERHDQHHLAKAQFGGKGYGAMMAFAVDGDPDTQNRFVSNLKVITSAVSLGHDETLIVHVGGGGRGGAERYPLNFQKYGHLRLSIGLEDPEDLIADIKNALDLTFA</sequence>
<reference key="1">
    <citation type="journal article" date="2010" name="Stand. Genomic Sci.">
        <title>Complete genome sequence of Rhizobium leguminosarum bv trifolii strain WSM2304, an effective microsymbiont of the South American clover Trifolium polymorphum.</title>
        <authorList>
            <person name="Reeve W."/>
            <person name="O'Hara G."/>
            <person name="Chain P."/>
            <person name="Ardley J."/>
            <person name="Brau L."/>
            <person name="Nandesena K."/>
            <person name="Tiwari R."/>
            <person name="Malfatti S."/>
            <person name="Kiss H."/>
            <person name="Lapidus A."/>
            <person name="Copeland A."/>
            <person name="Nolan M."/>
            <person name="Land M."/>
            <person name="Ivanova N."/>
            <person name="Mavromatis K."/>
            <person name="Markowitz V."/>
            <person name="Kyrpides N."/>
            <person name="Melino V."/>
            <person name="Denton M."/>
            <person name="Yates R."/>
            <person name="Howieson J."/>
        </authorList>
    </citation>
    <scope>NUCLEOTIDE SEQUENCE [LARGE SCALE GENOMIC DNA]</scope>
    <source>
        <strain>WSM2304</strain>
        <plasmid>pRLG201</plasmid>
    </source>
</reference>
<reference key="2">
    <citation type="journal article" date="2022" name="RSC Chem. Biol.">
        <title>Canavanine utilization via homoserine and hydroxyguanidine by a PLP-dependent gamma-lyase in Pseudomonadaceae and Rhizobiales.</title>
        <authorList>
            <person name="Hauth F."/>
            <person name="Buck H."/>
            <person name="Stanoppi M."/>
            <person name="Hartig J.S."/>
        </authorList>
    </citation>
    <scope>FUNCTION</scope>
    <scope>CATALYTIC ACTIVITY</scope>
    <scope>BIOPHYSICOCHEMICAL PROPERTIES</scope>
</reference>
<proteinExistence type="evidence at protein level"/>
<protein>
    <recommendedName>
        <fullName evidence="3">Canavanine gamma-lyase</fullName>
        <shortName evidence="3">CangammaL</shortName>
        <ecNumber evidence="2">4.4.1.43</ecNumber>
    </recommendedName>
</protein>
<organism>
    <name type="scientific">Rhizobium leguminosarum bv. trifolii (strain WSM2304)</name>
    <dbReference type="NCBI Taxonomy" id="395492"/>
    <lineage>
        <taxon>Bacteria</taxon>
        <taxon>Pseudomonadati</taxon>
        <taxon>Pseudomonadota</taxon>
        <taxon>Alphaproteobacteria</taxon>
        <taxon>Hyphomicrobiales</taxon>
        <taxon>Rhizobiaceae</taxon>
        <taxon>Rhizobium/Agrobacterium group</taxon>
        <taxon>Rhizobium</taxon>
    </lineage>
</organism>
<accession>P0DXD3</accession>
<geneLocation type="plasmid" evidence="5">
    <name>pRLG201</name>
</geneLocation>
<gene>
    <name evidence="5" type="ordered locus">Rleg2_5066</name>
</gene>
<feature type="chain" id="PRO_0000460368" description="Canavanine gamma-lyase">
    <location>
        <begin position="1"/>
        <end position="401"/>
    </location>
</feature>
<feature type="modified residue" description="N6-(pyridoxal phosphate)lysine" evidence="1">
    <location>
        <position position="214"/>
    </location>
</feature>
<name>CANGL_RHILW</name>
<keyword id="KW-0456">Lyase</keyword>
<keyword id="KW-0614">Plasmid</keyword>
<keyword id="KW-0663">Pyridoxal phosphate</keyword>
<keyword id="KW-1185">Reference proteome</keyword>